<gene>
    <name evidence="1" type="primary">rlmE</name>
    <name evidence="1" type="synonym">rrmJ</name>
    <name type="ordered locus">Msp_0364</name>
</gene>
<reference key="1">
    <citation type="journal article" date="2006" name="J. Bacteriol.">
        <title>The genome sequence of Methanosphaera stadtmanae reveals why this human intestinal archaeon is restricted to methanol and H2 for methane formation and ATP synthesis.</title>
        <authorList>
            <person name="Fricke W.F."/>
            <person name="Seedorf H."/>
            <person name="Henne A."/>
            <person name="Kruer M."/>
            <person name="Liesegang H."/>
            <person name="Hedderich R."/>
            <person name="Gottschalk G."/>
            <person name="Thauer R.K."/>
        </authorList>
    </citation>
    <scope>NUCLEOTIDE SEQUENCE [LARGE SCALE GENOMIC DNA]</scope>
    <source>
        <strain>ATCC 43021 / DSM 3091 / JCM 11832 / MCB-3</strain>
    </source>
</reference>
<comment type="function">
    <text evidence="1">Specifically methylates the uridine in position 2552 of 23S rRNA at the 2'-O position of the ribose in the fully assembled 50S ribosomal subunit.</text>
</comment>
<comment type="catalytic activity">
    <reaction evidence="1">
        <text>uridine(2552) in 23S rRNA + S-adenosyl-L-methionine = 2'-O-methyluridine(2552) in 23S rRNA + S-adenosyl-L-homocysteine + H(+)</text>
        <dbReference type="Rhea" id="RHEA:42720"/>
        <dbReference type="Rhea" id="RHEA-COMP:10202"/>
        <dbReference type="Rhea" id="RHEA-COMP:10203"/>
        <dbReference type="ChEBI" id="CHEBI:15378"/>
        <dbReference type="ChEBI" id="CHEBI:57856"/>
        <dbReference type="ChEBI" id="CHEBI:59789"/>
        <dbReference type="ChEBI" id="CHEBI:65315"/>
        <dbReference type="ChEBI" id="CHEBI:74478"/>
        <dbReference type="EC" id="2.1.1.166"/>
    </reaction>
</comment>
<comment type="subcellular location">
    <subcellularLocation>
        <location evidence="1">Cytoplasm</location>
    </subcellularLocation>
</comment>
<comment type="similarity">
    <text evidence="1">Belongs to the class I-like SAM-binding methyltransferase superfamily. RNA methyltransferase RlmE family.</text>
</comment>
<keyword id="KW-0963">Cytoplasm</keyword>
<keyword id="KW-0489">Methyltransferase</keyword>
<keyword id="KW-1185">Reference proteome</keyword>
<keyword id="KW-0698">rRNA processing</keyword>
<keyword id="KW-0949">S-adenosyl-L-methionine</keyword>
<keyword id="KW-0808">Transferase</keyword>
<accession>Q2NHD6</accession>
<sequence length="206" mass="23394">MSRWKAKHDKEHYYKLAKKQNYRSRASYKLKQLDKKYSLLKPDYNVVDLGAAPGGWSQVVAETIGEEGKGQIISVDLEYIKPIDHEAYTGVKGDFTTKETQDIIIELIDGKADVVLSDAAPKLTGIKDIDNFRAYDLSMAVIEIIDNILKNNGNLIMKAFQGEAYQEIIKNLKKKFRNVKTTKPNSSRKRSAEMYVIARGFRGSKK</sequence>
<dbReference type="EC" id="2.1.1.166" evidence="1"/>
<dbReference type="EMBL" id="CP000102">
    <property type="protein sequence ID" value="ABC56767.1"/>
    <property type="molecule type" value="Genomic_DNA"/>
</dbReference>
<dbReference type="RefSeq" id="WP_011405967.1">
    <property type="nucleotide sequence ID" value="NC_007681.1"/>
</dbReference>
<dbReference type="SMR" id="Q2NHD6"/>
<dbReference type="STRING" id="339860.Msp_0364"/>
<dbReference type="KEGG" id="mst:Msp_0364"/>
<dbReference type="eggNOG" id="arCOG00079">
    <property type="taxonomic scope" value="Archaea"/>
</dbReference>
<dbReference type="HOGENOM" id="CLU_009422_4_0_2"/>
<dbReference type="OrthoDB" id="26307at2157"/>
<dbReference type="Proteomes" id="UP000001931">
    <property type="component" value="Chromosome"/>
</dbReference>
<dbReference type="GO" id="GO:0005737">
    <property type="term" value="C:cytoplasm"/>
    <property type="evidence" value="ECO:0007669"/>
    <property type="project" value="UniProtKB-SubCell"/>
</dbReference>
<dbReference type="GO" id="GO:0008650">
    <property type="term" value="F:rRNA (uridine-2'-O-)-methyltransferase activity"/>
    <property type="evidence" value="ECO:0007669"/>
    <property type="project" value="UniProtKB-UniRule"/>
</dbReference>
<dbReference type="Gene3D" id="3.40.50.150">
    <property type="entry name" value="Vaccinia Virus protein VP39"/>
    <property type="match status" value="1"/>
</dbReference>
<dbReference type="HAMAP" id="MF_01547">
    <property type="entry name" value="RNA_methyltr_E"/>
    <property type="match status" value="1"/>
</dbReference>
<dbReference type="InterPro" id="IPR050082">
    <property type="entry name" value="RNA_methyltr_RlmE"/>
</dbReference>
<dbReference type="InterPro" id="IPR002877">
    <property type="entry name" value="RNA_MeTrfase_FtsJ_dom"/>
</dbReference>
<dbReference type="InterPro" id="IPR015507">
    <property type="entry name" value="rRNA-MeTfrase_E"/>
</dbReference>
<dbReference type="InterPro" id="IPR029063">
    <property type="entry name" value="SAM-dependent_MTases_sf"/>
</dbReference>
<dbReference type="PANTHER" id="PTHR10920:SF13">
    <property type="entry name" value="PRE-RRNA 2'-O-RIBOSE RNA METHYLTRANSFERASE FTSJ3"/>
    <property type="match status" value="1"/>
</dbReference>
<dbReference type="PANTHER" id="PTHR10920">
    <property type="entry name" value="RIBOSOMAL RNA METHYLTRANSFERASE"/>
    <property type="match status" value="1"/>
</dbReference>
<dbReference type="Pfam" id="PF01728">
    <property type="entry name" value="FtsJ"/>
    <property type="match status" value="1"/>
</dbReference>
<dbReference type="PIRSF" id="PIRSF005461">
    <property type="entry name" value="23S_rRNA_mtase"/>
    <property type="match status" value="1"/>
</dbReference>
<dbReference type="SUPFAM" id="SSF53335">
    <property type="entry name" value="S-adenosyl-L-methionine-dependent methyltransferases"/>
    <property type="match status" value="1"/>
</dbReference>
<proteinExistence type="inferred from homology"/>
<protein>
    <recommendedName>
        <fullName evidence="1">Ribosomal RNA large subunit methyltransferase E</fullName>
        <ecNumber evidence="1">2.1.1.166</ecNumber>
    </recommendedName>
    <alternativeName>
        <fullName evidence="1">23S rRNA Um2552 methyltransferase</fullName>
    </alternativeName>
    <alternativeName>
        <fullName evidence="1">rRNA (uridine-2'-O-)-methyltransferase</fullName>
    </alternativeName>
</protein>
<name>RLME_METST</name>
<organism>
    <name type="scientific">Methanosphaera stadtmanae (strain ATCC 43021 / DSM 3091 / JCM 11832 / MCB-3)</name>
    <dbReference type="NCBI Taxonomy" id="339860"/>
    <lineage>
        <taxon>Archaea</taxon>
        <taxon>Methanobacteriati</taxon>
        <taxon>Methanobacteriota</taxon>
        <taxon>Methanomada group</taxon>
        <taxon>Methanobacteria</taxon>
        <taxon>Methanobacteriales</taxon>
        <taxon>Methanobacteriaceae</taxon>
        <taxon>Methanosphaera</taxon>
    </lineage>
</organism>
<evidence type="ECO:0000255" key="1">
    <source>
        <dbReference type="HAMAP-Rule" id="MF_01547"/>
    </source>
</evidence>
<feature type="chain" id="PRO_0000282821" description="Ribosomal RNA large subunit methyltransferase E">
    <location>
        <begin position="1"/>
        <end position="206"/>
    </location>
</feature>
<feature type="active site" description="Proton acceptor" evidence="1">
    <location>
        <position position="158"/>
    </location>
</feature>
<feature type="binding site" evidence="1">
    <location>
        <position position="54"/>
    </location>
    <ligand>
        <name>S-adenosyl-L-methionine</name>
        <dbReference type="ChEBI" id="CHEBI:59789"/>
    </ligand>
</feature>
<feature type="binding site" evidence="1">
    <location>
        <position position="56"/>
    </location>
    <ligand>
        <name>S-adenosyl-L-methionine</name>
        <dbReference type="ChEBI" id="CHEBI:59789"/>
    </ligand>
</feature>
<feature type="binding site" evidence="1">
    <location>
        <position position="76"/>
    </location>
    <ligand>
        <name>S-adenosyl-L-methionine</name>
        <dbReference type="ChEBI" id="CHEBI:59789"/>
    </ligand>
</feature>
<feature type="binding site" evidence="1">
    <location>
        <position position="94"/>
    </location>
    <ligand>
        <name>S-adenosyl-L-methionine</name>
        <dbReference type="ChEBI" id="CHEBI:59789"/>
    </ligand>
</feature>
<feature type="binding site" evidence="1">
    <location>
        <position position="118"/>
    </location>
    <ligand>
        <name>S-adenosyl-L-methionine</name>
        <dbReference type="ChEBI" id="CHEBI:59789"/>
    </ligand>
</feature>